<comment type="similarity">
    <text evidence="1">Belongs to the bacterial ribosomal protein bL36 family.</text>
</comment>
<proteinExistence type="inferred from homology"/>
<reference key="1">
    <citation type="journal article" date="2006" name="Proc. Natl. Acad. Sci. U.S.A.">
        <title>Comparative genomics of the lactic acid bacteria.</title>
        <authorList>
            <person name="Makarova K.S."/>
            <person name="Slesarev A."/>
            <person name="Wolf Y.I."/>
            <person name="Sorokin A."/>
            <person name="Mirkin B."/>
            <person name="Koonin E.V."/>
            <person name="Pavlov A."/>
            <person name="Pavlova N."/>
            <person name="Karamychev V."/>
            <person name="Polouchine N."/>
            <person name="Shakhova V."/>
            <person name="Grigoriev I."/>
            <person name="Lou Y."/>
            <person name="Rohksar D."/>
            <person name="Lucas S."/>
            <person name="Huang K."/>
            <person name="Goodstein D.M."/>
            <person name="Hawkins T."/>
            <person name="Plengvidhya V."/>
            <person name="Welker D."/>
            <person name="Hughes J."/>
            <person name="Goh Y."/>
            <person name="Benson A."/>
            <person name="Baldwin K."/>
            <person name="Lee J.-H."/>
            <person name="Diaz-Muniz I."/>
            <person name="Dosti B."/>
            <person name="Smeianov V."/>
            <person name="Wechter W."/>
            <person name="Barabote R."/>
            <person name="Lorca G."/>
            <person name="Altermann E."/>
            <person name="Barrangou R."/>
            <person name="Ganesan B."/>
            <person name="Xie Y."/>
            <person name="Rawsthorne H."/>
            <person name="Tamir D."/>
            <person name="Parker C."/>
            <person name="Breidt F."/>
            <person name="Broadbent J.R."/>
            <person name="Hutkins R."/>
            <person name="O'Sullivan D."/>
            <person name="Steele J."/>
            <person name="Unlu G."/>
            <person name="Saier M.H. Jr."/>
            <person name="Klaenhammer T."/>
            <person name="Richardson P."/>
            <person name="Kozyavkin S."/>
            <person name="Weimer B.C."/>
            <person name="Mills D.A."/>
        </authorList>
    </citation>
    <scope>NUCLEOTIDE SEQUENCE [LARGE SCALE GENOMIC DNA]</scope>
    <source>
        <strain>ATCC 334 / BCRC 17002 / CCUG 31169 / CIP 107868 / KCTC 3260 / NRRL B-441</strain>
    </source>
</reference>
<keyword id="KW-1185">Reference proteome</keyword>
<keyword id="KW-0687">Ribonucleoprotein</keyword>
<keyword id="KW-0689">Ribosomal protein</keyword>
<feature type="chain" id="PRO_0000302222" description="Large ribosomal subunit protein bL36">
    <location>
        <begin position="1"/>
        <end position="38"/>
    </location>
</feature>
<organism>
    <name type="scientific">Lacticaseibacillus paracasei (strain ATCC 334 / BCRC 17002 / CCUG 31169 / CIP 107868 / KCTC 3260 / NRRL B-441)</name>
    <name type="common">Lactobacillus paracasei</name>
    <dbReference type="NCBI Taxonomy" id="321967"/>
    <lineage>
        <taxon>Bacteria</taxon>
        <taxon>Bacillati</taxon>
        <taxon>Bacillota</taxon>
        <taxon>Bacilli</taxon>
        <taxon>Lactobacillales</taxon>
        <taxon>Lactobacillaceae</taxon>
        <taxon>Lacticaseibacillus</taxon>
    </lineage>
</organism>
<protein>
    <recommendedName>
        <fullName evidence="1">Large ribosomal subunit protein bL36</fullName>
    </recommendedName>
    <alternativeName>
        <fullName evidence="2">50S ribosomal protein L36</fullName>
    </alternativeName>
</protein>
<name>RL36_LACP3</name>
<sequence length="38" mass="4448">MKVRPSVKKMCEHCKVVRRKGRVMIICSANPKHKQRQG</sequence>
<gene>
    <name evidence="1" type="primary">rpmJ</name>
    <name type="ordered locus">LSEI_2480</name>
</gene>
<evidence type="ECO:0000255" key="1">
    <source>
        <dbReference type="HAMAP-Rule" id="MF_00251"/>
    </source>
</evidence>
<evidence type="ECO:0000305" key="2"/>
<dbReference type="EMBL" id="CP000423">
    <property type="protein sequence ID" value="ABJ71216.1"/>
    <property type="molecule type" value="Genomic_DNA"/>
</dbReference>
<dbReference type="RefSeq" id="WP_003567518.1">
    <property type="nucleotide sequence ID" value="NC_008526.1"/>
</dbReference>
<dbReference type="RefSeq" id="YP_807658.1">
    <property type="nucleotide sequence ID" value="NC_008526.1"/>
</dbReference>
<dbReference type="SMR" id="Q035A6"/>
<dbReference type="STRING" id="321967.LSEI_2480"/>
<dbReference type="PaxDb" id="321967-LSEI_2480"/>
<dbReference type="GeneID" id="93270066"/>
<dbReference type="KEGG" id="lca:LSEI_2480"/>
<dbReference type="PATRIC" id="fig|321967.11.peg.2434"/>
<dbReference type="HOGENOM" id="CLU_135723_6_2_9"/>
<dbReference type="Proteomes" id="UP000001651">
    <property type="component" value="Chromosome"/>
</dbReference>
<dbReference type="GO" id="GO:0005737">
    <property type="term" value="C:cytoplasm"/>
    <property type="evidence" value="ECO:0007669"/>
    <property type="project" value="UniProtKB-ARBA"/>
</dbReference>
<dbReference type="GO" id="GO:1990904">
    <property type="term" value="C:ribonucleoprotein complex"/>
    <property type="evidence" value="ECO:0007669"/>
    <property type="project" value="UniProtKB-KW"/>
</dbReference>
<dbReference type="GO" id="GO:0005840">
    <property type="term" value="C:ribosome"/>
    <property type="evidence" value="ECO:0007669"/>
    <property type="project" value="UniProtKB-KW"/>
</dbReference>
<dbReference type="GO" id="GO:0003735">
    <property type="term" value="F:structural constituent of ribosome"/>
    <property type="evidence" value="ECO:0007669"/>
    <property type="project" value="InterPro"/>
</dbReference>
<dbReference type="GO" id="GO:0006412">
    <property type="term" value="P:translation"/>
    <property type="evidence" value="ECO:0007669"/>
    <property type="project" value="UniProtKB-UniRule"/>
</dbReference>
<dbReference type="HAMAP" id="MF_00251">
    <property type="entry name" value="Ribosomal_bL36"/>
    <property type="match status" value="1"/>
</dbReference>
<dbReference type="InterPro" id="IPR000473">
    <property type="entry name" value="Ribosomal_bL36"/>
</dbReference>
<dbReference type="InterPro" id="IPR035977">
    <property type="entry name" value="Ribosomal_bL36_sp"/>
</dbReference>
<dbReference type="NCBIfam" id="TIGR01022">
    <property type="entry name" value="rpmJ_bact"/>
    <property type="match status" value="1"/>
</dbReference>
<dbReference type="PANTHER" id="PTHR42888">
    <property type="entry name" value="50S RIBOSOMAL PROTEIN L36, CHLOROPLASTIC"/>
    <property type="match status" value="1"/>
</dbReference>
<dbReference type="PANTHER" id="PTHR42888:SF1">
    <property type="entry name" value="LARGE RIBOSOMAL SUBUNIT PROTEIN BL36C"/>
    <property type="match status" value="1"/>
</dbReference>
<dbReference type="Pfam" id="PF00444">
    <property type="entry name" value="Ribosomal_L36"/>
    <property type="match status" value="1"/>
</dbReference>
<dbReference type="SUPFAM" id="SSF57840">
    <property type="entry name" value="Ribosomal protein L36"/>
    <property type="match status" value="1"/>
</dbReference>
<dbReference type="PROSITE" id="PS00828">
    <property type="entry name" value="RIBOSOMAL_L36"/>
    <property type="match status" value="1"/>
</dbReference>
<accession>Q035A6</accession>